<sequence>MASSVTPLGSWVLLHHHPSTILTQSRSRSPPSLITLKPISLTPKRTVSSSSSSSLITKEDNNLKSSSSSFDFMSYIIRKADSVNKALDSAVPLREPLKIHEAMRYSLLAGGKRVRPVLCIAACELVGGEESLAMPARCAVEMIHTMSLIHDDLPCMDNDDLRRGKPTNHKVYGEDVAVLAGDALLSFAFEHLASATSSEVSPARVVRAVGELAKAIGTEGLVAGQVVDISSEGLDLNNVGLEHLKFIHLHKTAALLEASAVLGGIIGGGSDEEIERLRKFARCIGLLFQVVDDILDVTKSSQELGKTAGKDLIADKLTYPKLMGLEKSREFAEKLNTEARDQLLGFDSDKVAPLLALANYIANRQN</sequence>
<accession>Q43133</accession>
<keyword id="KW-0002">3D-structure</keyword>
<keyword id="KW-0125">Carotenoid biosynthesis</keyword>
<keyword id="KW-0150">Chloroplast</keyword>
<keyword id="KW-0957">Chromoplast</keyword>
<keyword id="KW-0414">Isoprene biosynthesis</keyword>
<keyword id="KW-0460">Magnesium</keyword>
<keyword id="KW-0479">Metal-binding</keyword>
<keyword id="KW-0934">Plastid</keyword>
<keyword id="KW-0808">Transferase</keyword>
<keyword id="KW-0809">Transit peptide</keyword>
<protein>
    <recommendedName>
        <fullName>Geranylgeranyl pyrophosphate synthase, chloroplastic/chromoplastic</fullName>
        <shortName>GGPP synthase</shortName>
        <shortName>GGPS</shortName>
        <ecNumber>2.5.1.-</ecNumber>
    </recommendedName>
    <alternativeName>
        <fullName>(2E,6E)-farnesyl diphosphate synthase</fullName>
    </alternativeName>
    <alternativeName>
        <fullName>Dimethylallyltranstransferase</fullName>
        <ecNumber>2.5.1.1</ecNumber>
    </alternativeName>
    <alternativeName>
        <fullName>Farnesyl diphosphate synthase</fullName>
    </alternativeName>
    <alternativeName>
        <fullName>Farnesyltranstransferase</fullName>
        <ecNumber>2.5.1.29</ecNumber>
    </alternativeName>
    <alternativeName>
        <fullName>Geranyltranstransferase</fullName>
        <ecNumber>2.5.1.10</ecNumber>
    </alternativeName>
</protein>
<name>GGPPS_SINAL</name>
<proteinExistence type="evidence at protein level"/>
<evidence type="ECO:0000250" key="1"/>
<evidence type="ECO:0000250" key="2">
    <source>
        <dbReference type="UniProtKB" id="P14324"/>
    </source>
</evidence>
<evidence type="ECO:0000256" key="3">
    <source>
        <dbReference type="SAM" id="MobiDB-lite"/>
    </source>
</evidence>
<evidence type="ECO:0000305" key="4"/>
<evidence type="ECO:0000305" key="5">
    <source>
    </source>
</evidence>
<evidence type="ECO:0007829" key="6">
    <source>
        <dbReference type="PDB" id="2J1O"/>
    </source>
</evidence>
<evidence type="ECO:0007829" key="7">
    <source>
        <dbReference type="PDB" id="2J1P"/>
    </source>
</evidence>
<organism>
    <name type="scientific">Sinapis alba</name>
    <name type="common">White mustard</name>
    <name type="synonym">Brassica hirta</name>
    <dbReference type="NCBI Taxonomy" id="3728"/>
    <lineage>
        <taxon>Eukaryota</taxon>
        <taxon>Viridiplantae</taxon>
        <taxon>Streptophyta</taxon>
        <taxon>Embryophyta</taxon>
        <taxon>Tracheophyta</taxon>
        <taxon>Spermatophyta</taxon>
        <taxon>Magnoliopsida</taxon>
        <taxon>eudicotyledons</taxon>
        <taxon>Gunneridae</taxon>
        <taxon>Pentapetalae</taxon>
        <taxon>rosids</taxon>
        <taxon>malvids</taxon>
        <taxon>Brassicales</taxon>
        <taxon>Brassicaceae</taxon>
        <taxon>Brassiceae</taxon>
        <taxon>Sinapis</taxon>
    </lineage>
</organism>
<reference key="1">
    <citation type="journal article" date="1997" name="Eur. J. Biochem.">
        <title>Chloroplast import of four carotenoid biosynthetic enzymes in vitro reveals differential fates prior to membrane binding and oligomeric assembly.</title>
        <authorList>
            <person name="Bonk M."/>
            <person name="Hoffmann B."/>
            <person name="von Lintig J."/>
            <person name="Schledz M."/>
            <person name="Al-Babili S."/>
            <person name="Hobeika E."/>
            <person name="Kleinig H."/>
            <person name="Beyer P."/>
        </authorList>
    </citation>
    <scope>NUCLEOTIDE SEQUENCE [MRNA]</scope>
    <scope>SUBCELLULAR LOCATION</scope>
</reference>
<gene>
    <name type="primary">GGPS1</name>
    <name type="synonym">GGPS</name>
</gene>
<feature type="transit peptide" description="Chloroplast and chromoplast">
    <location>
        <begin position="1"/>
        <end status="unknown"/>
    </location>
</feature>
<feature type="chain" id="PRO_0000016474" description="Geranylgeranyl pyrophosphate synthase, chloroplastic/chromoplastic">
    <location>
        <begin status="unknown"/>
        <end position="366"/>
    </location>
</feature>
<feature type="region of interest" description="Disordered" evidence="3">
    <location>
        <begin position="44"/>
        <end position="65"/>
    </location>
</feature>
<feature type="binding site">
    <location>
        <position position="112"/>
    </location>
    <ligand>
        <name>isopentenyl diphosphate</name>
        <dbReference type="ChEBI" id="CHEBI:128769"/>
    </ligand>
</feature>
<feature type="binding site">
    <location>
        <position position="115"/>
    </location>
    <ligand>
        <name>isopentenyl diphosphate</name>
        <dbReference type="ChEBI" id="CHEBI:128769"/>
    </ligand>
</feature>
<feature type="binding site">
    <location>
        <position position="144"/>
    </location>
    <ligand>
        <name>isopentenyl diphosphate</name>
        <dbReference type="ChEBI" id="CHEBI:128769"/>
    </ligand>
</feature>
<feature type="binding site" evidence="2">
    <location>
        <position position="151"/>
    </location>
    <ligand>
        <name>Mg(2+)</name>
        <dbReference type="ChEBI" id="CHEBI:18420"/>
        <label>1</label>
    </ligand>
</feature>
<feature type="binding site" evidence="2">
    <location>
        <position position="151"/>
    </location>
    <ligand>
        <name>Mg(2+)</name>
        <dbReference type="ChEBI" id="CHEBI:18420"/>
        <label>2</label>
    </ligand>
</feature>
<feature type="binding site" evidence="2">
    <location>
        <position position="157"/>
    </location>
    <ligand>
        <name>Mg(2+)</name>
        <dbReference type="ChEBI" id="CHEBI:18420"/>
        <label>1</label>
    </ligand>
</feature>
<feature type="binding site" evidence="2">
    <location>
        <position position="157"/>
    </location>
    <ligand>
        <name>Mg(2+)</name>
        <dbReference type="ChEBI" id="CHEBI:18420"/>
        <label>2</label>
    </ligand>
</feature>
<feature type="binding site" evidence="1">
    <location>
        <position position="162"/>
    </location>
    <ligand>
        <name>dimethylallyl diphosphate</name>
        <dbReference type="ChEBI" id="CHEBI:57623"/>
    </ligand>
</feature>
<feature type="binding site">
    <location>
        <position position="163"/>
    </location>
    <ligand>
        <name>isopentenyl diphosphate</name>
        <dbReference type="ChEBI" id="CHEBI:128769"/>
    </ligand>
</feature>
<feature type="binding site" evidence="1">
    <location>
        <position position="251"/>
    </location>
    <ligand>
        <name>dimethylallyl diphosphate</name>
        <dbReference type="ChEBI" id="CHEBI:57623"/>
    </ligand>
</feature>
<feature type="binding site" evidence="1">
    <location>
        <position position="252"/>
    </location>
    <ligand>
        <name>dimethylallyl diphosphate</name>
        <dbReference type="ChEBI" id="CHEBI:57623"/>
    </ligand>
</feature>
<feature type="binding site" evidence="1">
    <location>
        <position position="289"/>
    </location>
    <ligand>
        <name>dimethylallyl diphosphate</name>
        <dbReference type="ChEBI" id="CHEBI:57623"/>
    </ligand>
</feature>
<feature type="binding site" evidence="1">
    <location>
        <position position="306"/>
    </location>
    <ligand>
        <name>dimethylallyl diphosphate</name>
        <dbReference type="ChEBI" id="CHEBI:57623"/>
    </ligand>
</feature>
<feature type="binding site" evidence="1">
    <location>
        <position position="316"/>
    </location>
    <ligand>
        <name>dimethylallyl diphosphate</name>
        <dbReference type="ChEBI" id="CHEBI:57623"/>
    </ligand>
</feature>
<feature type="helix" evidence="7">
    <location>
        <begin position="73"/>
        <end position="90"/>
    </location>
</feature>
<feature type="helix" evidence="7">
    <location>
        <begin position="97"/>
        <end position="107"/>
    </location>
</feature>
<feature type="helix" evidence="7">
    <location>
        <begin position="114"/>
        <end position="125"/>
    </location>
</feature>
<feature type="helix" evidence="7">
    <location>
        <begin position="130"/>
        <end position="151"/>
    </location>
</feature>
<feature type="turn" evidence="7">
    <location>
        <begin position="154"/>
        <end position="157"/>
    </location>
</feature>
<feature type="strand" evidence="7">
    <location>
        <begin position="160"/>
        <end position="162"/>
    </location>
</feature>
<feature type="helix" evidence="7">
    <location>
        <begin position="168"/>
        <end position="172"/>
    </location>
</feature>
<feature type="helix" evidence="7">
    <location>
        <begin position="174"/>
        <end position="195"/>
    </location>
</feature>
<feature type="helix" evidence="7">
    <location>
        <begin position="202"/>
        <end position="216"/>
    </location>
</feature>
<feature type="turn" evidence="7">
    <location>
        <begin position="218"/>
        <end position="220"/>
    </location>
</feature>
<feature type="helix" evidence="7">
    <location>
        <begin position="221"/>
        <end position="227"/>
    </location>
</feature>
<feature type="helix" evidence="7">
    <location>
        <begin position="236"/>
        <end position="251"/>
    </location>
</feature>
<feature type="helix" evidence="7">
    <location>
        <begin position="253"/>
        <end position="266"/>
    </location>
</feature>
<feature type="helix" evidence="7">
    <location>
        <begin position="271"/>
        <end position="298"/>
    </location>
</feature>
<feature type="turn" evidence="6">
    <location>
        <begin position="314"/>
        <end position="316"/>
    </location>
</feature>
<feature type="helix" evidence="7">
    <location>
        <begin position="319"/>
        <end position="342"/>
    </location>
</feature>
<feature type="turn" evidence="7">
    <location>
        <begin position="343"/>
        <end position="345"/>
    </location>
</feature>
<feature type="turn" evidence="7">
    <location>
        <begin position="348"/>
        <end position="351"/>
    </location>
</feature>
<feature type="helix" evidence="7">
    <location>
        <begin position="352"/>
        <end position="363"/>
    </location>
</feature>
<comment type="function">
    <text>Catalyzes the trans-addition of the three molecules of IPP onto DMAPP to form geranylgeranyl pyrophosphate.</text>
</comment>
<comment type="catalytic activity">
    <reaction>
        <text>isopentenyl diphosphate + dimethylallyl diphosphate = (2E)-geranyl diphosphate + diphosphate</text>
        <dbReference type="Rhea" id="RHEA:22408"/>
        <dbReference type="ChEBI" id="CHEBI:33019"/>
        <dbReference type="ChEBI" id="CHEBI:57623"/>
        <dbReference type="ChEBI" id="CHEBI:58057"/>
        <dbReference type="ChEBI" id="CHEBI:128769"/>
        <dbReference type="EC" id="2.5.1.1"/>
    </reaction>
</comment>
<comment type="catalytic activity">
    <reaction>
        <text>isopentenyl diphosphate + (2E)-geranyl diphosphate = (2E,6E)-farnesyl diphosphate + diphosphate</text>
        <dbReference type="Rhea" id="RHEA:19361"/>
        <dbReference type="ChEBI" id="CHEBI:33019"/>
        <dbReference type="ChEBI" id="CHEBI:58057"/>
        <dbReference type="ChEBI" id="CHEBI:128769"/>
        <dbReference type="ChEBI" id="CHEBI:175763"/>
        <dbReference type="EC" id="2.5.1.10"/>
    </reaction>
</comment>
<comment type="catalytic activity">
    <reaction>
        <text>isopentenyl diphosphate + (2E,6E)-farnesyl diphosphate = (2E,6E,10E)-geranylgeranyl diphosphate + diphosphate</text>
        <dbReference type="Rhea" id="RHEA:17653"/>
        <dbReference type="ChEBI" id="CHEBI:33019"/>
        <dbReference type="ChEBI" id="CHEBI:58756"/>
        <dbReference type="ChEBI" id="CHEBI:128769"/>
        <dbReference type="ChEBI" id="CHEBI:175763"/>
        <dbReference type="EC" id="2.5.1.29"/>
    </reaction>
</comment>
<comment type="cofactor">
    <cofactor evidence="1">
        <name>Mg(2+)</name>
        <dbReference type="ChEBI" id="CHEBI:18420"/>
    </cofactor>
    <text evidence="1">Binds 2 Mg(2+) ions per subunit.</text>
</comment>
<comment type="pathway">
    <text>Isoprenoid biosynthesis; farnesyl diphosphate biosynthesis; farnesyl diphosphate from geranyl diphosphate and isopentenyl diphosphate: step 1/1.</text>
</comment>
<comment type="pathway">
    <text>Isoprenoid biosynthesis; geranyl diphosphate biosynthesis; geranyl diphosphate from dimethylallyl diphosphate and isopentenyl diphosphate: step 1/1.</text>
</comment>
<comment type="pathway">
    <text>Isoprenoid biosynthesis; geranylgeranyl diphosphate biosynthesis; geranylgeranyl diphosphate from farnesyl diphosphate and isopentenyl diphosphate: step 1/1.</text>
</comment>
<comment type="subunit">
    <text>Dimer.</text>
</comment>
<comment type="subcellular location">
    <subcellularLocation>
        <location evidence="5">Plastid</location>
        <location evidence="5">Chloroplast stroma</location>
    </subcellularLocation>
    <subcellularLocation>
        <location evidence="5">Plastid</location>
        <location evidence="5">Chromoplast</location>
    </subcellularLocation>
</comment>
<comment type="similarity">
    <text evidence="4">Belongs to the FPP/GGPP synthase family.</text>
</comment>
<dbReference type="EC" id="2.5.1.-"/>
<dbReference type="EC" id="2.5.1.1"/>
<dbReference type="EC" id="2.5.1.29"/>
<dbReference type="EC" id="2.5.1.10"/>
<dbReference type="EMBL" id="X98795">
    <property type="protein sequence ID" value="CAA67330.1"/>
    <property type="molecule type" value="mRNA"/>
</dbReference>
<dbReference type="PIR" id="T10452">
    <property type="entry name" value="T10452"/>
</dbReference>
<dbReference type="PDB" id="2J1O">
    <property type="method" value="X-ray"/>
    <property type="resolution" value="2.00 A"/>
    <property type="chains" value="A=74-366"/>
</dbReference>
<dbReference type="PDB" id="2J1P">
    <property type="method" value="X-ray"/>
    <property type="resolution" value="1.80 A"/>
    <property type="chains" value="A/B=74-366"/>
</dbReference>
<dbReference type="PDBsum" id="2J1O"/>
<dbReference type="PDBsum" id="2J1P"/>
<dbReference type="SMR" id="Q43133"/>
<dbReference type="BRENDA" id="2.5.1.29">
    <property type="organism ID" value="5734"/>
</dbReference>
<dbReference type="UniPathway" id="UPA00259">
    <property type="reaction ID" value="UER00368"/>
</dbReference>
<dbReference type="UniPathway" id="UPA00260">
    <property type="reaction ID" value="UER00369"/>
</dbReference>
<dbReference type="UniPathway" id="UPA00389">
    <property type="reaction ID" value="UER00564"/>
</dbReference>
<dbReference type="EvolutionaryTrace" id="Q43133"/>
<dbReference type="GO" id="GO:0009570">
    <property type="term" value="C:chloroplast stroma"/>
    <property type="evidence" value="ECO:0007669"/>
    <property type="project" value="UniProtKB-SubCell"/>
</dbReference>
<dbReference type="GO" id="GO:0009509">
    <property type="term" value="C:chromoplast"/>
    <property type="evidence" value="ECO:0007669"/>
    <property type="project" value="UniProtKB-SubCell"/>
</dbReference>
<dbReference type="GO" id="GO:0004337">
    <property type="term" value="F:(2E,6E)-farnesyl diphosphate synthase activity"/>
    <property type="evidence" value="ECO:0007669"/>
    <property type="project" value="UniProtKB-EC"/>
</dbReference>
<dbReference type="GO" id="GO:0004161">
    <property type="term" value="F:dimethylallyltranstransferase activity"/>
    <property type="evidence" value="ECO:0007669"/>
    <property type="project" value="UniProtKB-EC"/>
</dbReference>
<dbReference type="GO" id="GO:0004311">
    <property type="term" value="F:geranylgeranyl diphosphate synthase activity"/>
    <property type="evidence" value="ECO:0007669"/>
    <property type="project" value="UniProtKB-EC"/>
</dbReference>
<dbReference type="GO" id="GO:0046872">
    <property type="term" value="F:metal ion binding"/>
    <property type="evidence" value="ECO:0007669"/>
    <property type="project" value="UniProtKB-KW"/>
</dbReference>
<dbReference type="GO" id="GO:0016117">
    <property type="term" value="P:carotenoid biosynthetic process"/>
    <property type="evidence" value="ECO:0007669"/>
    <property type="project" value="UniProtKB-KW"/>
</dbReference>
<dbReference type="GO" id="GO:0045337">
    <property type="term" value="P:farnesyl diphosphate biosynthetic process"/>
    <property type="evidence" value="ECO:0007669"/>
    <property type="project" value="UniProtKB-UniPathway"/>
</dbReference>
<dbReference type="GO" id="GO:0033384">
    <property type="term" value="P:geranyl diphosphate biosynthetic process"/>
    <property type="evidence" value="ECO:0007669"/>
    <property type="project" value="UniProtKB-UniPathway"/>
</dbReference>
<dbReference type="GO" id="GO:0033386">
    <property type="term" value="P:geranylgeranyl diphosphate biosynthetic process"/>
    <property type="evidence" value="ECO:0007669"/>
    <property type="project" value="UniProtKB-UniPathway"/>
</dbReference>
<dbReference type="CDD" id="cd00685">
    <property type="entry name" value="Trans_IPPS_HT"/>
    <property type="match status" value="1"/>
</dbReference>
<dbReference type="FunFam" id="1.10.600.10:FF:000001">
    <property type="entry name" value="Geranylgeranyl diphosphate synthase"/>
    <property type="match status" value="1"/>
</dbReference>
<dbReference type="Gene3D" id="1.10.600.10">
    <property type="entry name" value="Farnesyl Diphosphate Synthase"/>
    <property type="match status" value="1"/>
</dbReference>
<dbReference type="InterPro" id="IPR008949">
    <property type="entry name" value="Isoprenoid_synthase_dom_sf"/>
</dbReference>
<dbReference type="InterPro" id="IPR000092">
    <property type="entry name" value="Polyprenyl_synt"/>
</dbReference>
<dbReference type="InterPro" id="IPR033749">
    <property type="entry name" value="Polyprenyl_synt_CS"/>
</dbReference>
<dbReference type="InterPro" id="IPR053378">
    <property type="entry name" value="Prenyl_diphosphate_synthase"/>
</dbReference>
<dbReference type="NCBIfam" id="NF045485">
    <property type="entry name" value="FPPsyn"/>
    <property type="match status" value="1"/>
</dbReference>
<dbReference type="PANTHER" id="PTHR43281">
    <property type="entry name" value="FARNESYL DIPHOSPHATE SYNTHASE"/>
    <property type="match status" value="1"/>
</dbReference>
<dbReference type="PANTHER" id="PTHR43281:SF32">
    <property type="entry name" value="HETERODIMERIC GERANYLGERANYL PYROPHOSPHATE SYNTHASE LARGE SUBUNIT 1, CHLOROPLASTIC"/>
    <property type="match status" value="1"/>
</dbReference>
<dbReference type="Pfam" id="PF00348">
    <property type="entry name" value="polyprenyl_synt"/>
    <property type="match status" value="1"/>
</dbReference>
<dbReference type="SFLD" id="SFLDS00005">
    <property type="entry name" value="Isoprenoid_Synthase_Type_I"/>
    <property type="match status" value="1"/>
</dbReference>
<dbReference type="SFLD" id="SFLDG01017">
    <property type="entry name" value="Polyprenyl_Transferase_Like"/>
    <property type="match status" value="1"/>
</dbReference>
<dbReference type="SUPFAM" id="SSF48576">
    <property type="entry name" value="Terpenoid synthases"/>
    <property type="match status" value="1"/>
</dbReference>
<dbReference type="PROSITE" id="PS00723">
    <property type="entry name" value="POLYPRENYL_SYNTHASE_1"/>
    <property type="match status" value="1"/>
</dbReference>
<dbReference type="PROSITE" id="PS00444">
    <property type="entry name" value="POLYPRENYL_SYNTHASE_2"/>
    <property type="match status" value="1"/>
</dbReference>